<organism>
    <name type="scientific">Histophilus somni (strain 129Pt)</name>
    <name type="common">Haemophilus somnus</name>
    <dbReference type="NCBI Taxonomy" id="205914"/>
    <lineage>
        <taxon>Bacteria</taxon>
        <taxon>Pseudomonadati</taxon>
        <taxon>Pseudomonadota</taxon>
        <taxon>Gammaproteobacteria</taxon>
        <taxon>Pasteurellales</taxon>
        <taxon>Pasteurellaceae</taxon>
        <taxon>Histophilus</taxon>
    </lineage>
</organism>
<gene>
    <name evidence="1" type="primary">glpB</name>
    <name type="ordered locus">HS_0513</name>
</gene>
<sequence>MKFDVVIIGGGLAGLTCGIMLQQKGKCCAIINNGQSAMNFSSGSMDLLSQLPNGEKINSFEQGYDSLEEQLPNHPYCLFGKQHVLQKAKQFEQLIEKINLNVTGSYKQNHFRVTPLGGLHRTWLSADCIPTMDLHDEHFGYQKITVLGIEGYHDFQPHLLAENLIQHPQFTHCSITTALLHLPELDQLRLTSREFRSVNISQLLEHRLAFRELVQEIKQASGDGEAIFLPACFGLDNQDFFNKLTLETGLNLYELPTLPPSLVGLRQHKKLKTYFEKLGGFILNGDKALRAVIEDQQVKQIYTQLHQEHGIFAEHFVLASGSFFSNGLVSVFDRLLEPIFDVDMIGNSMIDIQNRLTWTARRFSSPQPYQSAGVAINSCCQLKKSGQIIKNLYAAGNVIGGYNALELGCGSGVAVVTALTVADNIIEAQNRV</sequence>
<accession>Q0I239</accession>
<proteinExistence type="inferred from homology"/>
<evidence type="ECO:0000255" key="1">
    <source>
        <dbReference type="HAMAP-Rule" id="MF_00753"/>
    </source>
</evidence>
<name>GLPB_HISS1</name>
<reference key="1">
    <citation type="journal article" date="2007" name="J. Bacteriol.">
        <title>Complete genome sequence of Haemophilus somnus (Histophilus somni) strain 129Pt and comparison to Haemophilus ducreyi 35000HP and Haemophilus influenzae Rd.</title>
        <authorList>
            <person name="Challacombe J.F."/>
            <person name="Duncan A.J."/>
            <person name="Brettin T.S."/>
            <person name="Bruce D."/>
            <person name="Chertkov O."/>
            <person name="Detter J.C."/>
            <person name="Han C.S."/>
            <person name="Misra M."/>
            <person name="Richardson P."/>
            <person name="Tapia R."/>
            <person name="Thayer N."/>
            <person name="Xie G."/>
            <person name="Inzana T.J."/>
        </authorList>
    </citation>
    <scope>NUCLEOTIDE SEQUENCE [LARGE SCALE GENOMIC DNA]</scope>
    <source>
        <strain>129Pt</strain>
    </source>
</reference>
<protein>
    <recommendedName>
        <fullName evidence="1">Anaerobic glycerol-3-phosphate dehydrogenase subunit B</fullName>
        <shortName evidence="1">Anaerobic G-3-P dehydrogenase subunit B</shortName>
        <shortName evidence="1">Anaerobic G3Pdhase B</shortName>
        <ecNumber evidence="1">1.1.5.3</ecNumber>
    </recommendedName>
</protein>
<feature type="chain" id="PRO_1000046606" description="Anaerobic glycerol-3-phosphate dehydrogenase subunit B">
    <location>
        <begin position="1"/>
        <end position="432"/>
    </location>
</feature>
<dbReference type="EC" id="1.1.5.3" evidence="1"/>
<dbReference type="EMBL" id="CP000436">
    <property type="protein sequence ID" value="ABI24790.1"/>
    <property type="molecule type" value="Genomic_DNA"/>
</dbReference>
<dbReference type="KEGG" id="hso:HS_0513"/>
<dbReference type="eggNOG" id="COG3075">
    <property type="taxonomic scope" value="Bacteria"/>
</dbReference>
<dbReference type="HOGENOM" id="CLU_047793_0_0_6"/>
<dbReference type="UniPathway" id="UPA00618">
    <property type="reaction ID" value="UER00673"/>
</dbReference>
<dbReference type="GO" id="GO:0009331">
    <property type="term" value="C:glycerol-3-phosphate dehydrogenase (FAD) complex"/>
    <property type="evidence" value="ECO:0007669"/>
    <property type="project" value="InterPro"/>
</dbReference>
<dbReference type="GO" id="GO:0004368">
    <property type="term" value="F:glycerol-3-phosphate dehydrogenase (quinone) activity"/>
    <property type="evidence" value="ECO:0007669"/>
    <property type="project" value="UniProtKB-UniRule"/>
</dbReference>
<dbReference type="GO" id="GO:0019563">
    <property type="term" value="P:glycerol catabolic process"/>
    <property type="evidence" value="ECO:0007669"/>
    <property type="project" value="UniProtKB-UniRule"/>
</dbReference>
<dbReference type="Gene3D" id="3.50.50.60">
    <property type="entry name" value="FAD/NAD(P)-binding domain"/>
    <property type="match status" value="1"/>
</dbReference>
<dbReference type="HAMAP" id="MF_00753">
    <property type="entry name" value="Glycerol3P_GlpB"/>
    <property type="match status" value="1"/>
</dbReference>
<dbReference type="InterPro" id="IPR003953">
    <property type="entry name" value="FAD-dep_OxRdtase_2_FAD-bd"/>
</dbReference>
<dbReference type="InterPro" id="IPR050315">
    <property type="entry name" value="FAD-oxidoreductase_2"/>
</dbReference>
<dbReference type="InterPro" id="IPR036188">
    <property type="entry name" value="FAD/NAD-bd_sf"/>
</dbReference>
<dbReference type="InterPro" id="IPR009158">
    <property type="entry name" value="G3P_DH_GlpB_su"/>
</dbReference>
<dbReference type="NCBIfam" id="TIGR03378">
    <property type="entry name" value="glycerol3P_GlpB"/>
    <property type="match status" value="1"/>
</dbReference>
<dbReference type="NCBIfam" id="NF003718">
    <property type="entry name" value="PRK05329.1-1"/>
    <property type="match status" value="1"/>
</dbReference>
<dbReference type="NCBIfam" id="NF003719">
    <property type="entry name" value="PRK05329.1-2"/>
    <property type="match status" value="1"/>
</dbReference>
<dbReference type="NCBIfam" id="NF003720">
    <property type="entry name" value="PRK05329.1-3"/>
    <property type="match status" value="1"/>
</dbReference>
<dbReference type="NCBIfam" id="NF003721">
    <property type="entry name" value="PRK05329.1-4"/>
    <property type="match status" value="1"/>
</dbReference>
<dbReference type="PANTHER" id="PTHR43400:SF11">
    <property type="entry name" value="ANAEROBIC GLYCEROL-3-PHOSPHATE DEHYDROGENASE SUBUNIT B"/>
    <property type="match status" value="1"/>
</dbReference>
<dbReference type="PANTHER" id="PTHR43400">
    <property type="entry name" value="FUMARATE REDUCTASE"/>
    <property type="match status" value="1"/>
</dbReference>
<dbReference type="Pfam" id="PF00890">
    <property type="entry name" value="FAD_binding_2"/>
    <property type="match status" value="1"/>
</dbReference>
<dbReference type="PIRSF" id="PIRSF000141">
    <property type="entry name" value="Anaerobic_G3P_dh"/>
    <property type="match status" value="1"/>
</dbReference>
<dbReference type="SUPFAM" id="SSF51905">
    <property type="entry name" value="FAD/NAD(P)-binding domain"/>
    <property type="match status" value="1"/>
</dbReference>
<comment type="function">
    <text evidence="1">Conversion of glycerol 3-phosphate to dihydroxyacetone. Uses fumarate or nitrate as electron acceptor.</text>
</comment>
<comment type="catalytic activity">
    <reaction evidence="1">
        <text>a quinone + sn-glycerol 3-phosphate = dihydroxyacetone phosphate + a quinol</text>
        <dbReference type="Rhea" id="RHEA:18977"/>
        <dbReference type="ChEBI" id="CHEBI:24646"/>
        <dbReference type="ChEBI" id="CHEBI:57597"/>
        <dbReference type="ChEBI" id="CHEBI:57642"/>
        <dbReference type="ChEBI" id="CHEBI:132124"/>
        <dbReference type="EC" id="1.1.5.3"/>
    </reaction>
</comment>
<comment type="cofactor">
    <cofactor evidence="1">
        <name>FMN</name>
        <dbReference type="ChEBI" id="CHEBI:58210"/>
    </cofactor>
</comment>
<comment type="pathway">
    <text evidence="1">Polyol metabolism; glycerol degradation via glycerol kinase pathway; glycerone phosphate from sn-glycerol 3-phosphate (anaerobic route): step 1/1.</text>
</comment>
<comment type="subunit">
    <text evidence="1">Composed of a catalytic GlpA/B dimer and of membrane bound GlpC.</text>
</comment>
<comment type="similarity">
    <text evidence="1">Belongs to the anaerobic G-3-P dehydrogenase subunit B family.</text>
</comment>
<keyword id="KW-0285">Flavoprotein</keyword>
<keyword id="KW-0288">FMN</keyword>
<keyword id="KW-0560">Oxidoreductase</keyword>